<organism>
    <name type="scientific">Hyalophora cecropia</name>
    <name type="common">Cecropia moth</name>
    <name type="synonym">Samia cecropia</name>
    <dbReference type="NCBI Taxonomy" id="7123"/>
    <lineage>
        <taxon>Eukaryota</taxon>
        <taxon>Metazoa</taxon>
        <taxon>Ecdysozoa</taxon>
        <taxon>Arthropoda</taxon>
        <taxon>Hexapoda</taxon>
        <taxon>Insecta</taxon>
        <taxon>Pterygota</taxon>
        <taxon>Neoptera</taxon>
        <taxon>Endopterygota</taxon>
        <taxon>Lepidoptera</taxon>
        <taxon>Glossata</taxon>
        <taxon>Ditrysia</taxon>
        <taxon>Bombycoidea</taxon>
        <taxon>Saturniidae</taxon>
        <taxon>Saturniinae</taxon>
        <taxon>Attacini</taxon>
        <taxon>Hyalophora</taxon>
    </lineage>
</organism>
<protein>
    <recommendedName>
        <fullName>Pheromone-binding protein</fullName>
        <shortName>PBP</shortName>
    </recommendedName>
</protein>
<proteinExistence type="evidence at protein level"/>
<keyword id="KW-0903">Direct protein sequencing</keyword>
<keyword id="KW-0589">Pheromone response</keyword>
<keyword id="KW-0590">Pheromone-binding</keyword>
<keyword id="KW-0813">Transport</keyword>
<reference key="1">
    <citation type="journal article" date="1991" name="J. Neurobiol.">
        <title>Odorant-binding-protein subfamilies associate with distinct classes of olfactory receptor neurons in insects.</title>
        <authorList>
            <person name="Vogt R.G."/>
            <person name="Prestwich G.D."/>
            <person name="Lerner M.R."/>
        </authorList>
    </citation>
    <scope>PROTEIN SEQUENCE</scope>
</reference>
<dbReference type="SMR" id="P34175"/>
<dbReference type="GO" id="GO:0005550">
    <property type="term" value="F:pheromone binding"/>
    <property type="evidence" value="ECO:0007669"/>
    <property type="project" value="UniProtKB-KW"/>
</dbReference>
<dbReference type="GO" id="GO:0019236">
    <property type="term" value="P:response to pheromone"/>
    <property type="evidence" value="ECO:0007669"/>
    <property type="project" value="UniProtKB-KW"/>
</dbReference>
<dbReference type="Gene3D" id="1.10.238.20">
    <property type="entry name" value="Pheromone/general odorant binding protein domain"/>
    <property type="match status" value="1"/>
</dbReference>
<dbReference type="InterPro" id="IPR036728">
    <property type="entry name" value="PBP_GOBP_sf"/>
</dbReference>
<dbReference type="SUPFAM" id="SSF47565">
    <property type="entry name" value="Insect pheromone/odorant-binding proteins"/>
    <property type="match status" value="1"/>
</dbReference>
<feature type="chain" id="PRO_0000074479" description="Pheromone-binding protein">
    <location>
        <begin position="1"/>
        <end position="35" status="greater than"/>
    </location>
</feature>
<feature type="non-terminal residue">
    <location>
        <position position="35"/>
    </location>
</feature>
<evidence type="ECO:0000305" key="1"/>
<comment type="function">
    <text>This major soluble protein in olfactory sensilla of male moths might serve to solubilize the extremely hydrophobic pheromone molecules and to transport pheromone through the aqueous lymph to receptors located on olfactory cilia.</text>
</comment>
<comment type="tissue specificity">
    <text>Antenna.</text>
</comment>
<comment type="similarity">
    <text evidence="1">Belongs to the PBP/GOBP family.</text>
</comment>
<accession>P34175</accession>
<name>PBP_HYACE</name>
<sequence length="35" mass="4061">SPEVMKSLSENFCKAMDQCKQELNLPDEVIKDLYN</sequence>